<comment type="function">
    <text evidence="1">Core subunit of the mitochondrial membrane respiratory chain NADH dehydrogenase (Complex I) that is believed to belong to the minimal assembly required for catalysis. Complex I functions in the transfer of electrons from NADH to the respiratory chain. The immediate electron acceptor for the enzyme is believed to be ubiquinone (By similarity).</text>
</comment>
<comment type="catalytic activity">
    <reaction>
        <text>a ubiquinone + NADH + 5 H(+)(in) = a ubiquinol + NAD(+) + 4 H(+)(out)</text>
        <dbReference type="Rhea" id="RHEA:29091"/>
        <dbReference type="Rhea" id="RHEA-COMP:9565"/>
        <dbReference type="Rhea" id="RHEA-COMP:9566"/>
        <dbReference type="ChEBI" id="CHEBI:15378"/>
        <dbReference type="ChEBI" id="CHEBI:16389"/>
        <dbReference type="ChEBI" id="CHEBI:17976"/>
        <dbReference type="ChEBI" id="CHEBI:57540"/>
        <dbReference type="ChEBI" id="CHEBI:57945"/>
        <dbReference type="EC" id="7.1.1.2"/>
    </reaction>
</comment>
<comment type="subcellular location">
    <subcellularLocation>
        <location evidence="1">Mitochondrion membrane</location>
        <topology evidence="1">Multi-pass membrane protein</topology>
    </subcellularLocation>
</comment>
<comment type="similarity">
    <text evidence="3">Belongs to the complex I subunit 4 family.</text>
</comment>
<dbReference type="EC" id="7.1.1.2"/>
<dbReference type="EMBL" id="Y12025">
    <property type="protein sequence ID" value="CAA72753.1"/>
    <property type="molecule type" value="Genomic_DNA"/>
</dbReference>
<dbReference type="EMBL" id="AF338715">
    <property type="protein sequence ID" value="AAK53354.1"/>
    <property type="molecule type" value="Genomic_DNA"/>
</dbReference>
<dbReference type="PIR" id="B99613">
    <property type="entry name" value="B99613"/>
</dbReference>
<dbReference type="PIR" id="T11528">
    <property type="entry name" value="T11528"/>
</dbReference>
<dbReference type="RefSeq" id="NP_115450.1">
    <property type="nucleotide sequence ID" value="NC_002785.1"/>
</dbReference>
<dbReference type="SMR" id="O21406"/>
<dbReference type="GeneID" id="803272"/>
<dbReference type="CTD" id="4538"/>
<dbReference type="GO" id="GO:0031966">
    <property type="term" value="C:mitochondrial membrane"/>
    <property type="evidence" value="ECO:0007669"/>
    <property type="project" value="UniProtKB-SubCell"/>
</dbReference>
<dbReference type="GO" id="GO:0008137">
    <property type="term" value="F:NADH dehydrogenase (ubiquinone) activity"/>
    <property type="evidence" value="ECO:0007669"/>
    <property type="project" value="UniProtKB-EC"/>
</dbReference>
<dbReference type="GO" id="GO:0048039">
    <property type="term" value="F:ubiquinone binding"/>
    <property type="evidence" value="ECO:0007669"/>
    <property type="project" value="TreeGrafter"/>
</dbReference>
<dbReference type="GO" id="GO:0042773">
    <property type="term" value="P:ATP synthesis coupled electron transport"/>
    <property type="evidence" value="ECO:0007669"/>
    <property type="project" value="InterPro"/>
</dbReference>
<dbReference type="GO" id="GO:0015990">
    <property type="term" value="P:electron transport coupled proton transport"/>
    <property type="evidence" value="ECO:0007669"/>
    <property type="project" value="TreeGrafter"/>
</dbReference>
<dbReference type="InterPro" id="IPR000260">
    <property type="entry name" value="NADH4_N"/>
</dbReference>
<dbReference type="InterPro" id="IPR010227">
    <property type="entry name" value="NADH_Q_OxRdtase_chainM/4"/>
</dbReference>
<dbReference type="InterPro" id="IPR003918">
    <property type="entry name" value="NADH_UbQ_OxRdtase"/>
</dbReference>
<dbReference type="InterPro" id="IPR001750">
    <property type="entry name" value="ND/Mrp_TM"/>
</dbReference>
<dbReference type="NCBIfam" id="TIGR01972">
    <property type="entry name" value="NDH_I_M"/>
    <property type="match status" value="1"/>
</dbReference>
<dbReference type="PANTHER" id="PTHR43507">
    <property type="entry name" value="NADH-UBIQUINONE OXIDOREDUCTASE CHAIN 4"/>
    <property type="match status" value="1"/>
</dbReference>
<dbReference type="PANTHER" id="PTHR43507:SF20">
    <property type="entry name" value="NADH-UBIQUINONE OXIDOREDUCTASE CHAIN 4"/>
    <property type="match status" value="1"/>
</dbReference>
<dbReference type="Pfam" id="PF01059">
    <property type="entry name" value="Oxidored_q5_N"/>
    <property type="match status" value="1"/>
</dbReference>
<dbReference type="Pfam" id="PF00361">
    <property type="entry name" value="Proton_antipo_M"/>
    <property type="match status" value="1"/>
</dbReference>
<dbReference type="PRINTS" id="PR01437">
    <property type="entry name" value="NUOXDRDTASE4"/>
</dbReference>
<sequence length="458" mass="50955">MLKIIIPTIMLLPTALLSPKASLWTNTTTYSLLIATISLQWLNPTYFPHKNMTPWTGIDQISAPLLVLSCWLLPLMLLASQNHLQQEPLVRKRTFIVTLTTIQPFIILAFSATELTLFYISFEATLIPTLILITRWGNQPERLSAGIYLLFYTLISSLPLLVTILHLHTQIGTLHMPTLELTHPLLTHSWTGTLSGLALLMAFMVKAPLYGLHLWLPKAHVEAPIAGSMLLAALLLKLGGYGIMRVTLLMGPLTDRLSYPFLALALWGALMTSSICLRQTDLKSLIAYSSVSHMGLVIAASMIQTDWSFSGAMILMISHGLTSSMLFCLANTNYERTHSRILLLTRGLQPLLPLMSVWWLLANLTNMALPPTTNLMAELTIMIALFNWSTPTIILTGLATLLTASYTLFMLSMTQRGTLPTHLTSIHNSNTREHLLMTLHIFPMLLLMLKPELISGVI</sequence>
<proteinExistence type="inferred from homology"/>
<geneLocation type="mitochondrion"/>
<name>NU4M_STRCA</name>
<gene>
    <name type="primary">MT-ND4</name>
    <name type="synonym">MTND4</name>
    <name type="synonym">NADH4</name>
    <name type="synonym">ND4</name>
</gene>
<accession>O21406</accession>
<keyword id="KW-0249">Electron transport</keyword>
<keyword id="KW-0472">Membrane</keyword>
<keyword id="KW-0496">Mitochondrion</keyword>
<keyword id="KW-0520">NAD</keyword>
<keyword id="KW-0679">Respiratory chain</keyword>
<keyword id="KW-1278">Translocase</keyword>
<keyword id="KW-0812">Transmembrane</keyword>
<keyword id="KW-1133">Transmembrane helix</keyword>
<keyword id="KW-0813">Transport</keyword>
<keyword id="KW-0830">Ubiquinone</keyword>
<reference key="1">
    <citation type="journal article" date="1997" name="Mol. Biol. Evol.">
        <title>The mtDNA sequence of the ostrich and the divergence between paleognathous and neognathous birds.</title>
        <authorList>
            <person name="Harlid A."/>
            <person name="Janke A."/>
            <person name="Arnason U."/>
        </authorList>
    </citation>
    <scope>NUCLEOTIDE SEQUENCE [GENOMIC DNA]</scope>
</reference>
<reference key="2">
    <citation type="journal article" date="2001" name="Proc. R. Soc. B">
        <title>Complete mitochondrial DNA genome sequences of extinct birds: ratite phylogenetics and the vicariance biogeography hypothesis.</title>
        <authorList>
            <person name="Haddrath O."/>
            <person name="Baker A.J."/>
        </authorList>
    </citation>
    <scope>NUCLEOTIDE SEQUENCE [GENOMIC DNA]</scope>
</reference>
<protein>
    <recommendedName>
        <fullName>NADH-ubiquinone oxidoreductase chain 4</fullName>
        <ecNumber>7.1.1.2</ecNumber>
    </recommendedName>
    <alternativeName>
        <fullName>NADH dehydrogenase subunit 4</fullName>
    </alternativeName>
</protein>
<evidence type="ECO:0000250" key="1"/>
<evidence type="ECO:0000255" key="2"/>
<evidence type="ECO:0000305" key="3"/>
<feature type="chain" id="PRO_0000117990" description="NADH-ubiquinone oxidoreductase chain 4">
    <location>
        <begin position="1"/>
        <end position="458"/>
    </location>
</feature>
<feature type="transmembrane region" description="Helical" evidence="2">
    <location>
        <begin position="21"/>
        <end position="43"/>
    </location>
</feature>
<feature type="transmembrane region" description="Helical" evidence="2">
    <location>
        <begin position="58"/>
        <end position="78"/>
    </location>
</feature>
<feature type="transmembrane region" description="Helical" evidence="2">
    <location>
        <begin position="93"/>
        <end position="112"/>
    </location>
</feature>
<feature type="transmembrane region" description="Helical" evidence="2">
    <location>
        <begin position="116"/>
        <end position="138"/>
    </location>
</feature>
<feature type="transmembrane region" description="Helical" evidence="2">
    <location>
        <begin position="145"/>
        <end position="165"/>
    </location>
</feature>
<feature type="transmembrane region" description="Helical" evidence="2">
    <location>
        <begin position="196"/>
        <end position="216"/>
    </location>
</feature>
<feature type="transmembrane region" description="Helical" evidence="2">
    <location>
        <begin position="224"/>
        <end position="244"/>
    </location>
</feature>
<feature type="transmembrane region" description="Helical" evidence="2">
    <location>
        <begin position="257"/>
        <end position="277"/>
    </location>
</feature>
<feature type="transmembrane region" description="Helical" evidence="2">
    <location>
        <begin position="285"/>
        <end position="305"/>
    </location>
</feature>
<feature type="transmembrane region" description="Helical" evidence="2">
    <location>
        <begin position="309"/>
        <end position="329"/>
    </location>
</feature>
<feature type="transmembrane region" description="Helical" evidence="2">
    <location>
        <begin position="341"/>
        <end position="361"/>
    </location>
</feature>
<feature type="transmembrane region" description="Helical" evidence="2">
    <location>
        <begin position="379"/>
        <end position="399"/>
    </location>
</feature>
<organism>
    <name type="scientific">Struthio camelus</name>
    <name type="common">Common ostrich</name>
    <dbReference type="NCBI Taxonomy" id="8801"/>
    <lineage>
        <taxon>Eukaryota</taxon>
        <taxon>Metazoa</taxon>
        <taxon>Chordata</taxon>
        <taxon>Craniata</taxon>
        <taxon>Vertebrata</taxon>
        <taxon>Euteleostomi</taxon>
        <taxon>Archelosauria</taxon>
        <taxon>Archosauria</taxon>
        <taxon>Dinosauria</taxon>
        <taxon>Saurischia</taxon>
        <taxon>Theropoda</taxon>
        <taxon>Coelurosauria</taxon>
        <taxon>Aves</taxon>
        <taxon>Palaeognathae</taxon>
        <taxon>Struthioniformes</taxon>
        <taxon>Struthionidae</taxon>
        <taxon>Struthio</taxon>
    </lineage>
</organism>